<proteinExistence type="evidence at protein level"/>
<accession>P09232</accession>
<accession>D3DLJ0</accession>
<gene>
    <name type="primary">PRB1</name>
    <name type="ordered locus">YEL060C</name>
</gene>
<feature type="signal peptide" evidence="1">
    <location>
        <begin position="1"/>
        <end position="19"/>
    </location>
</feature>
<feature type="propeptide" id="PRO_0000027136" evidence="6">
    <location>
        <begin position="20"/>
        <end position="280"/>
    </location>
</feature>
<feature type="chain" id="PRO_0000027137" description="Cerevisin">
    <location>
        <begin position="281"/>
        <end position="574" status="uncertain"/>
    </location>
</feature>
<feature type="propeptide" id="PRO_0000417567">
    <location>
        <begin position="575" status="uncertain"/>
        <end position="635"/>
    </location>
</feature>
<feature type="domain" description="Inhibitor I9" evidence="1">
    <location>
        <begin position="182"/>
        <end position="278"/>
    </location>
</feature>
<feature type="domain" description="Peptidase S8" evidence="2">
    <location>
        <begin position="289"/>
        <end position="614"/>
    </location>
</feature>
<feature type="region of interest" description="Disordered" evidence="3">
    <location>
        <begin position="35"/>
        <end position="155"/>
    </location>
</feature>
<feature type="compositionally biased region" description="Basic and acidic residues" evidence="3">
    <location>
        <begin position="35"/>
        <end position="50"/>
    </location>
</feature>
<feature type="compositionally biased region" description="Basic and acidic residues" evidence="3">
    <location>
        <begin position="74"/>
        <end position="85"/>
    </location>
</feature>
<feature type="compositionally biased region" description="Basic and acidic residues" evidence="3">
    <location>
        <begin position="94"/>
        <end position="109"/>
    </location>
</feature>
<feature type="compositionally biased region" description="Basic and acidic residues" evidence="3">
    <location>
        <begin position="126"/>
        <end position="136"/>
    </location>
</feature>
<feature type="compositionally biased region" description="Basic residues" evidence="3">
    <location>
        <begin position="137"/>
        <end position="155"/>
    </location>
</feature>
<feature type="active site" description="Charge relay system" evidence="2">
    <location>
        <position position="325"/>
    </location>
</feature>
<feature type="active site" description="Charge relay system" evidence="2">
    <location>
        <position position="357"/>
    </location>
</feature>
<feature type="active site" description="Charge relay system" evidence="2">
    <location>
        <position position="519"/>
    </location>
</feature>
<feature type="glycosylation site" description="N-linked (GlcNAc...) asparagine" evidence="9">
    <location>
        <position position="594"/>
    </location>
</feature>
<feature type="disulfide bond" evidence="1">
    <location>
        <begin position="460"/>
        <end position="491"/>
    </location>
</feature>
<feature type="sequence conflict" description="In Ref. 4; CAA77886/AAA34495." evidence="9" ref="4">
    <original>F</original>
    <variation>K</variation>
    <location>
        <position position="622"/>
    </location>
</feature>
<evidence type="ECO:0000255" key="1"/>
<evidence type="ECO:0000255" key="2">
    <source>
        <dbReference type="PROSITE-ProRule" id="PRU01240"/>
    </source>
</evidence>
<evidence type="ECO:0000256" key="3">
    <source>
        <dbReference type="SAM" id="MobiDB-lite"/>
    </source>
</evidence>
<evidence type="ECO:0000269" key="4">
    <source>
    </source>
</evidence>
<evidence type="ECO:0000269" key="5">
    <source>
    </source>
</evidence>
<evidence type="ECO:0000269" key="6">
    <source>
    </source>
</evidence>
<evidence type="ECO:0000269" key="7">
    <source>
    </source>
</evidence>
<evidence type="ECO:0000269" key="8">
    <source>
    </source>
</evidence>
<evidence type="ECO:0000305" key="9"/>
<evidence type="ECO:0000305" key="10">
    <source>
    </source>
</evidence>
<comment type="function">
    <text evidence="7 8">Vacuolar proteinase B involved in protein degradation in the vacuole. Among other substrates, acts on carboxypeptidase Y (cpY/PRC1) to activate it by processing its Pro-peptide. Required for meiosis and spore formation, and for optimal survival in stationary phase.</text>
</comment>
<comment type="catalytic activity">
    <reaction>
        <text>Hydrolysis of proteins with broad specificity, and of Bz-Arg-OEt &gt; Ac-Tyr-OEt. Does not hydrolyze peptide amides.</text>
        <dbReference type="EC" id="3.4.21.48"/>
    </reaction>
</comment>
<comment type="subcellular location">
    <subcellularLocation>
        <location>Vacuole</location>
    </subcellularLocation>
</comment>
<comment type="induction">
    <text evidence="5">Repressed by glucose.</text>
</comment>
<comment type="PTM">
    <text>Activated by N- and C-terminal proteolytic cleavage. Protease B (PrB/PRB1) processing requires at least 4 cleavages. First, the signal peptide is removed from the 76 kDa preproprotease B by signal peptidase in the ER. Then, PrB removes its own Pro-region (in trans) at the N-terminus, producing a 39 kDa form before exiting the ER. In the Golgi complex, the C-terminal Post-region of the 40 kDa proprotease B undergoes protease A (PrA/PEP4)-mediated processing to a 37 kDa intermediate, which in turn is quickly processed again by PrB in trans to yield the 31 kDa mature PrB.</text>
</comment>
<comment type="PTM">
    <text>Glycosylated. Preproprotease B is a 76 kDa unglycosylated precursor that enters the endoplasmic reticulum (ER), where it receives one Asn-linked and an undetermined number of non-Asn-linked carbohydrate side chains. In the Golgi complex, the 39 kDa form becomes 40 kDa, due to elaboration of the Asn-linked side chain. The ultimate processing step removes a peptide containing the Asn-linked chain. Mature PrB has only non-Asn-linked carbohydrates.</text>
</comment>
<comment type="miscellaneous">
    <text evidence="10">[beta] is the prion form of PrB. In contrast to other prions, [beta] is not the result of a conformational change of the cellular PrB, but distinguishes itself by autoactivation in trans. Usually, PrB is already involved in its own maturation, but PrA plays a critical role. PrpA mutants lack PrB. However, in growth conditions that favor PRB1 expression, PrB activity persists in PrA mutants due to autocleavage of PrB in trans. This condition is stably transmitted to daughter cells in mitosis. [beta] can be cured by growing in PRB1-repressing conditions. Once a cell has lost PrB activity, it remains stably inactive. Thus, there are 2 alternative states, that are chromosomally identical, but phenotypically distinct. Since PrA is able to activate PrB, normal cells always carry the [beta] prion. Its absence and transmission are only observable in the absence of PrA.</text>
</comment>
<comment type="miscellaneous">
    <text evidence="4">Present with 1600 molecules/cell in log phase SD medium.</text>
</comment>
<comment type="similarity">
    <text evidence="9">Belongs to the peptidase S8 family.</text>
</comment>
<reference key="1">
    <citation type="journal article" date="1987" name="Mol. Cell. Biol.">
        <title>Protease B of the lysosomelike vacuole of the yeast Saccharomyces cerevisiae is homologous to the subtilisin family of serine proteases.</title>
        <authorList>
            <person name="Moehle C.M."/>
            <person name="Tizard R."/>
            <person name="Lemmon S.K."/>
            <person name="Smart J."/>
            <person name="Jones E.W."/>
        </authorList>
    </citation>
    <scope>NUCLEOTIDE SEQUENCE [GENOMIC DNA]</scope>
    <scope>PROTEIN SEQUENCE OF 281-295</scope>
    <source>
        <strain>ATCC 204510 / AB320</strain>
    </source>
</reference>
<reference key="2">
    <citation type="journal article" date="1997" name="Nature">
        <title>The nucleotide sequence of Saccharomyces cerevisiae chromosome V.</title>
        <authorList>
            <person name="Dietrich F.S."/>
            <person name="Mulligan J.T."/>
            <person name="Hennessy K.M."/>
            <person name="Yelton M.A."/>
            <person name="Allen E."/>
            <person name="Araujo R."/>
            <person name="Aviles E."/>
            <person name="Berno A."/>
            <person name="Brennan T."/>
            <person name="Carpenter J."/>
            <person name="Chen E."/>
            <person name="Cherry J.M."/>
            <person name="Chung E."/>
            <person name="Duncan M."/>
            <person name="Guzman E."/>
            <person name="Hartzell G."/>
            <person name="Hunicke-Smith S."/>
            <person name="Hyman R.W."/>
            <person name="Kayser A."/>
            <person name="Komp C."/>
            <person name="Lashkari D."/>
            <person name="Lew H."/>
            <person name="Lin D."/>
            <person name="Mosedale D."/>
            <person name="Nakahara K."/>
            <person name="Namath A."/>
            <person name="Norgren R."/>
            <person name="Oefner P."/>
            <person name="Oh C."/>
            <person name="Petel F.X."/>
            <person name="Roberts D."/>
            <person name="Sehl P."/>
            <person name="Schramm S."/>
            <person name="Shogren T."/>
            <person name="Smith V."/>
            <person name="Taylor P."/>
            <person name="Wei Y."/>
            <person name="Botstein D."/>
            <person name="Davis R.W."/>
        </authorList>
    </citation>
    <scope>NUCLEOTIDE SEQUENCE [LARGE SCALE GENOMIC DNA]</scope>
    <source>
        <strain>ATCC 204508 / S288c</strain>
    </source>
</reference>
<reference key="3">
    <citation type="journal article" date="2014" name="G3 (Bethesda)">
        <title>The reference genome sequence of Saccharomyces cerevisiae: Then and now.</title>
        <authorList>
            <person name="Engel S.R."/>
            <person name="Dietrich F.S."/>
            <person name="Fisk D.G."/>
            <person name="Binkley G."/>
            <person name="Balakrishnan R."/>
            <person name="Costanzo M.C."/>
            <person name="Dwight S.S."/>
            <person name="Hitz B.C."/>
            <person name="Karra K."/>
            <person name="Nash R.S."/>
            <person name="Weng S."/>
            <person name="Wong E.D."/>
            <person name="Lloyd P."/>
            <person name="Skrzypek M.S."/>
            <person name="Miyasato S.R."/>
            <person name="Simison M."/>
            <person name="Cherry J.M."/>
        </authorList>
    </citation>
    <scope>GENOME REANNOTATION</scope>
    <source>
        <strain>ATCC 204508 / S288c</strain>
    </source>
</reference>
<reference key="4">
    <citation type="submission" date="1992-03" db="EMBL/GenBank/DDBJ databases">
        <authorList>
            <person name="Saunders W.S."/>
            <person name="He L."/>
            <person name="Loo K.K."/>
            <person name="Hoyt M."/>
        </authorList>
    </citation>
    <scope>NUCLEOTIDE SEQUENCE [GENOMIC DNA] OF 605-635</scope>
    <source>
        <strain>ATCC 204508 / S288c</strain>
    </source>
</reference>
<reference key="5">
    <citation type="journal article" date="1981" name="Genetics">
        <title>Protein degradation, meiosis and sporulation in proteinase-deficient mutants of Saccharomyces cerevisiae.</title>
        <authorList>
            <person name="Zubenko G.S."/>
            <person name="Jones E.W."/>
        </authorList>
    </citation>
    <scope>FUNCTION</scope>
</reference>
<reference key="6">
    <citation type="journal article" date="1982" name="Genetics">
        <title>Genetic properties of mutations at the PEP4 locus in Saccharomyces cerevisiae.</title>
        <authorList>
            <person name="Zubenko G.S."/>
            <person name="Park F.J."/>
            <person name="Jones E.W."/>
        </authorList>
    </citation>
    <scope>FUNCTION</scope>
</reference>
<reference key="7">
    <citation type="journal article" date="1989" name="J. Cell Biol.">
        <title>Processing pathway for protease B of Saccharomyces cerevisiae.</title>
        <authorList>
            <person name="Moehle C.M."/>
            <person name="Dixon C.K."/>
            <person name="Jones E.W."/>
        </authorList>
    </citation>
    <scope>PROTEOLYTIC PROCESSING</scope>
</reference>
<reference key="8">
    <citation type="journal article" date="1990" name="Genetics">
        <title>Consequences of growth media, gene copy number, and regulatory mutations on the expression of the PRB1 gene of Saccharomyces cerevisiae.</title>
        <authorList>
            <person name="Moehle C.M."/>
            <person name="Jones E.W."/>
        </authorList>
    </citation>
    <scope>INDUCTION</scope>
</reference>
<reference key="9">
    <citation type="journal article" date="1991" name="J. Biol. Chem.">
        <title>Activation of the proteinase B precursor of the yeast Saccharomyces cerevisiae by autocatalysis and by an internal sequence.</title>
        <authorList>
            <person name="Nebes V.L."/>
            <person name="Jones E.W."/>
        </authorList>
    </citation>
    <scope>PROTEOLYTIC PROCESSING</scope>
</reference>
<reference key="10">
    <citation type="journal article" date="2003" name="Genes Dev.">
        <title>Heritable activity: a prion that propagates by covalent autoactivation.</title>
        <authorList>
            <person name="Roberts B.T."/>
            <person name="Wickner R.B."/>
        </authorList>
    </citation>
    <scope>PRION IDENTIFICATION</scope>
</reference>
<reference key="11">
    <citation type="journal article" date="2003" name="Nature">
        <title>Global analysis of protein expression in yeast.</title>
        <authorList>
            <person name="Ghaemmaghami S."/>
            <person name="Huh W.-K."/>
            <person name="Bower K."/>
            <person name="Howson R.W."/>
            <person name="Belle A."/>
            <person name="Dephoure N."/>
            <person name="O'Shea E.K."/>
            <person name="Weissman J.S."/>
        </authorList>
    </citation>
    <scope>LEVEL OF PROTEIN EXPRESSION [LARGE SCALE ANALYSIS]</scope>
</reference>
<reference key="12">
    <citation type="journal article" date="2008" name="Mol. Cell. Proteomics">
        <title>A multidimensional chromatography technology for in-depth phosphoproteome analysis.</title>
        <authorList>
            <person name="Albuquerque C.P."/>
            <person name="Smolka M.B."/>
            <person name="Payne S.H."/>
            <person name="Bafna V."/>
            <person name="Eng J."/>
            <person name="Zhou H."/>
        </authorList>
    </citation>
    <scope>IDENTIFICATION BY MASS SPECTROMETRY [LARGE SCALE ANALYSIS]</scope>
</reference>
<keyword id="KW-0034">Amyloid</keyword>
<keyword id="KW-0903">Direct protein sequencing</keyword>
<keyword id="KW-1015">Disulfide bond</keyword>
<keyword id="KW-0325">Glycoprotein</keyword>
<keyword id="KW-0378">Hydrolase</keyword>
<keyword id="KW-0640">Prion</keyword>
<keyword id="KW-0645">Protease</keyword>
<keyword id="KW-1185">Reference proteome</keyword>
<keyword id="KW-0720">Serine protease</keyword>
<keyword id="KW-0732">Signal</keyword>
<keyword id="KW-0926">Vacuole</keyword>
<keyword id="KW-0865">Zymogen</keyword>
<dbReference type="EC" id="3.4.21.48"/>
<dbReference type="EMBL" id="M18097">
    <property type="protein sequence ID" value="AAA34901.1"/>
    <property type="molecule type" value="Genomic_DNA"/>
</dbReference>
<dbReference type="EMBL" id="U18795">
    <property type="protein sequence ID" value="AAB65027.1"/>
    <property type="molecule type" value="Genomic_DNA"/>
</dbReference>
<dbReference type="EMBL" id="Z11859">
    <property type="protein sequence ID" value="CAA77886.1"/>
    <property type="molecule type" value="Genomic_DNA"/>
</dbReference>
<dbReference type="EMBL" id="M90522">
    <property type="protein sequence ID" value="AAA34495.1"/>
    <property type="molecule type" value="Genomic_DNA"/>
</dbReference>
<dbReference type="EMBL" id="BK006939">
    <property type="protein sequence ID" value="DAA07594.1"/>
    <property type="molecule type" value="Genomic_DNA"/>
</dbReference>
<dbReference type="PIR" id="A29358">
    <property type="entry name" value="A29358"/>
</dbReference>
<dbReference type="RefSeq" id="NP_010854.1">
    <property type="nucleotide sequence ID" value="NM_001178875.1"/>
</dbReference>
<dbReference type="SMR" id="P09232"/>
<dbReference type="BioGRID" id="36669">
    <property type="interactions" value="162"/>
</dbReference>
<dbReference type="DIP" id="DIP-2544N"/>
<dbReference type="FunCoup" id="P09232">
    <property type="interactions" value="476"/>
</dbReference>
<dbReference type="IntAct" id="P09232">
    <property type="interactions" value="38"/>
</dbReference>
<dbReference type="MINT" id="P09232"/>
<dbReference type="STRING" id="4932.YEL060C"/>
<dbReference type="MEROPS" id="S08.052"/>
<dbReference type="GlyCosmos" id="P09232">
    <property type="glycosylation" value="1 site, No reported glycans"/>
</dbReference>
<dbReference type="GlyGen" id="P09232">
    <property type="glycosylation" value="1 site"/>
</dbReference>
<dbReference type="iPTMnet" id="P09232"/>
<dbReference type="PaxDb" id="4932-YEL060C"/>
<dbReference type="PeptideAtlas" id="P09232"/>
<dbReference type="TopDownProteomics" id="P09232"/>
<dbReference type="EnsemblFungi" id="YEL060C_mRNA">
    <property type="protein sequence ID" value="YEL060C"/>
    <property type="gene ID" value="YEL060C"/>
</dbReference>
<dbReference type="GeneID" id="856649"/>
<dbReference type="KEGG" id="sce:YEL060C"/>
<dbReference type="AGR" id="SGD:S000000786"/>
<dbReference type="SGD" id="S000000786">
    <property type="gene designation" value="PRB1"/>
</dbReference>
<dbReference type="VEuPathDB" id="FungiDB:YEL060C"/>
<dbReference type="eggNOG" id="KOG1153">
    <property type="taxonomic scope" value="Eukaryota"/>
</dbReference>
<dbReference type="GeneTree" id="ENSGT00940000176425"/>
<dbReference type="HOGENOM" id="CLU_011263_3_0_1"/>
<dbReference type="InParanoid" id="P09232"/>
<dbReference type="OMA" id="RHPDVDY"/>
<dbReference type="OrthoDB" id="206201at2759"/>
<dbReference type="BioCyc" id="YEAST:YEL060C-MONOMER"/>
<dbReference type="Reactome" id="R-SCE-8866427">
    <property type="pathway name" value="VLDLR internalisation and degradation"/>
</dbReference>
<dbReference type="Reactome" id="R-SCE-8964038">
    <property type="pathway name" value="LDL clearance"/>
</dbReference>
<dbReference type="BioGRID-ORCS" id="856649">
    <property type="hits" value="3 hits in 10 CRISPR screens"/>
</dbReference>
<dbReference type="PRO" id="PR:P09232"/>
<dbReference type="Proteomes" id="UP000002311">
    <property type="component" value="Chromosome V"/>
</dbReference>
<dbReference type="RNAct" id="P09232">
    <property type="molecule type" value="protein"/>
</dbReference>
<dbReference type="GO" id="GO:0005615">
    <property type="term" value="C:extracellular space"/>
    <property type="evidence" value="ECO:0000318"/>
    <property type="project" value="GO_Central"/>
</dbReference>
<dbReference type="GO" id="GO:0000324">
    <property type="term" value="C:fungal-type vacuole"/>
    <property type="evidence" value="ECO:0000304"/>
    <property type="project" value="SGD"/>
</dbReference>
<dbReference type="GO" id="GO:0000328">
    <property type="term" value="C:fungal-type vacuole lumen"/>
    <property type="evidence" value="ECO:0000304"/>
    <property type="project" value="SGD"/>
</dbReference>
<dbReference type="GO" id="GO:0004252">
    <property type="term" value="F:serine-type endopeptidase activity"/>
    <property type="evidence" value="ECO:0000315"/>
    <property type="project" value="SGD"/>
</dbReference>
<dbReference type="GO" id="GO:0000425">
    <property type="term" value="P:pexophagy"/>
    <property type="evidence" value="ECO:0000315"/>
    <property type="project" value="SGD"/>
</dbReference>
<dbReference type="GO" id="GO:0007039">
    <property type="term" value="P:protein catabolic process in the vacuole"/>
    <property type="evidence" value="ECO:0000315"/>
    <property type="project" value="SGD"/>
</dbReference>
<dbReference type="GO" id="GO:0006508">
    <property type="term" value="P:proteolysis"/>
    <property type="evidence" value="ECO:0007669"/>
    <property type="project" value="UniProtKB-KW"/>
</dbReference>
<dbReference type="GO" id="GO:0030435">
    <property type="term" value="P:sporulation resulting in formation of a cellular spore"/>
    <property type="evidence" value="ECO:0000315"/>
    <property type="project" value="SGD"/>
</dbReference>
<dbReference type="CDD" id="cd04077">
    <property type="entry name" value="Peptidases_S8_PCSK9_ProteinaseK_like"/>
    <property type="match status" value="1"/>
</dbReference>
<dbReference type="FunFam" id="3.40.50.200:FF:000007">
    <property type="entry name" value="Subtilisin-like serine protease"/>
    <property type="match status" value="1"/>
</dbReference>
<dbReference type="FunFam" id="3.30.70.80:FF:000011">
    <property type="entry name" value="Vacuolar protease B"/>
    <property type="match status" value="1"/>
</dbReference>
<dbReference type="Gene3D" id="3.30.70.80">
    <property type="entry name" value="Peptidase S8 propeptide/proteinase inhibitor I9"/>
    <property type="match status" value="1"/>
</dbReference>
<dbReference type="Gene3D" id="3.40.50.200">
    <property type="entry name" value="Peptidase S8/S53 domain"/>
    <property type="match status" value="1"/>
</dbReference>
<dbReference type="InterPro" id="IPR034193">
    <property type="entry name" value="PCSK9_ProteinaseK-like"/>
</dbReference>
<dbReference type="InterPro" id="IPR000209">
    <property type="entry name" value="Peptidase_S8/S53_dom"/>
</dbReference>
<dbReference type="InterPro" id="IPR036852">
    <property type="entry name" value="Peptidase_S8/S53_dom_sf"/>
</dbReference>
<dbReference type="InterPro" id="IPR023827">
    <property type="entry name" value="Peptidase_S8_Asp-AS"/>
</dbReference>
<dbReference type="InterPro" id="IPR022398">
    <property type="entry name" value="Peptidase_S8_His-AS"/>
</dbReference>
<dbReference type="InterPro" id="IPR023828">
    <property type="entry name" value="Peptidase_S8_Ser-AS"/>
</dbReference>
<dbReference type="InterPro" id="IPR050131">
    <property type="entry name" value="Peptidase_S8_subtilisin-like"/>
</dbReference>
<dbReference type="InterPro" id="IPR015500">
    <property type="entry name" value="Peptidase_S8_subtilisin-rel"/>
</dbReference>
<dbReference type="InterPro" id="IPR010259">
    <property type="entry name" value="S8pro/Inhibitor_I9"/>
</dbReference>
<dbReference type="InterPro" id="IPR037045">
    <property type="entry name" value="S8pro/Inhibitor_I9_sf"/>
</dbReference>
<dbReference type="PANTHER" id="PTHR43806:SF11">
    <property type="entry name" value="CEREVISIN-RELATED"/>
    <property type="match status" value="1"/>
</dbReference>
<dbReference type="PANTHER" id="PTHR43806">
    <property type="entry name" value="PEPTIDASE S8"/>
    <property type="match status" value="1"/>
</dbReference>
<dbReference type="Pfam" id="PF05922">
    <property type="entry name" value="Inhibitor_I9"/>
    <property type="match status" value="1"/>
</dbReference>
<dbReference type="Pfam" id="PF00082">
    <property type="entry name" value="Peptidase_S8"/>
    <property type="match status" value="1"/>
</dbReference>
<dbReference type="PRINTS" id="PR00723">
    <property type="entry name" value="SUBTILISIN"/>
</dbReference>
<dbReference type="SUPFAM" id="SSF54897">
    <property type="entry name" value="Protease propeptides/inhibitors"/>
    <property type="match status" value="1"/>
</dbReference>
<dbReference type="SUPFAM" id="SSF52743">
    <property type="entry name" value="Subtilisin-like"/>
    <property type="match status" value="1"/>
</dbReference>
<dbReference type="PROSITE" id="PS51892">
    <property type="entry name" value="SUBTILASE"/>
    <property type="match status" value="1"/>
</dbReference>
<dbReference type="PROSITE" id="PS00136">
    <property type="entry name" value="SUBTILASE_ASP"/>
    <property type="match status" value="1"/>
</dbReference>
<dbReference type="PROSITE" id="PS00137">
    <property type="entry name" value="SUBTILASE_HIS"/>
    <property type="match status" value="1"/>
</dbReference>
<dbReference type="PROSITE" id="PS00138">
    <property type="entry name" value="SUBTILASE_SER"/>
    <property type="match status" value="1"/>
</dbReference>
<protein>
    <recommendedName>
        <fullName>Cerevisin</fullName>
        <ecNumber>3.4.21.48</ecNumber>
    </recommendedName>
    <alternativeName>
        <fullName>Proteinase YSCB</fullName>
    </alternativeName>
    <alternativeName>
        <fullName>Vacuolar protease B</fullName>
        <shortName>PrB</shortName>
    </alternativeName>
</protein>
<name>PRTB_YEAST</name>
<sequence length="635" mass="69621">MKLENTLFTLGALGSISAALVIPNLENAADHHELINKEDHHERPRKVEFTKDDDEEPSDSEDKEHGKFHKKGRKGQDKESPEFNGKRASGSHGSAHEGGKGMKPKHESSNDDDNDDKKKKPHHKGGCHENKVEEKKMKGKKVKGKKHHEKTLEKGRHHNRLAPLVSTAQFNPDAISKIIPNRYIIVFKRGAPQEEIDFHKENVQQAQLQSVENLSAEDAFFISTKDTSLSTSEAGGIQDSFNIDNLFSGYIGYFTQEIVDLIRQNPLVDFVERDSIVEATEFDTQNSAPWGLARISHRERLNLGSFNKYLYDDDAGRGVTSYVIDTGVNINHKDFEKRAIWGKTIPLNDEDLDGNGHGTHCAGTIASKHYGVAKNANVVAVKVLRSNGSGTMSDVVKGVEYAAKAHQKEAQEKKKGFKGSTANMSLGGGKSPALDLAVNAAVEVGIHFAVAAGNENQDACNTSPASADKAITVGASTLSDDRAYFSNWGKCVDVFAPGLNILSTYIGSDDATATLSGTSMASPHVAGLLTYFLSLQPGSDSEFFELGQDSLTPQQLKKKLIHYSTKDILFDIPEDTPNVLIYNGGGQDLSAFWNDTKKSHSSGFKQELNMDEFIGSKTDLIFDQVRDILDKLNII</sequence>
<organism>
    <name type="scientific">Saccharomyces cerevisiae (strain ATCC 204508 / S288c)</name>
    <name type="common">Baker's yeast</name>
    <dbReference type="NCBI Taxonomy" id="559292"/>
    <lineage>
        <taxon>Eukaryota</taxon>
        <taxon>Fungi</taxon>
        <taxon>Dikarya</taxon>
        <taxon>Ascomycota</taxon>
        <taxon>Saccharomycotina</taxon>
        <taxon>Saccharomycetes</taxon>
        <taxon>Saccharomycetales</taxon>
        <taxon>Saccharomycetaceae</taxon>
        <taxon>Saccharomyces</taxon>
    </lineage>
</organism>